<proteinExistence type="inferred from homology"/>
<protein>
    <recommendedName>
        <fullName evidence="1">1D-myo-inositol 2-acetamido-2-deoxy-alpha-D-glucopyranoside deacetylase 1</fullName>
        <shortName evidence="1">GlcNAc-Ins deacetylase 1</shortName>
        <ecNumber evidence="1">3.5.1.103</ecNumber>
    </recommendedName>
    <alternativeName>
        <fullName>N-acetyl-1-D-myo-inositol 2-amino-2-deoxy-alpha-D-glucopyranoside deacetylase 1</fullName>
    </alternativeName>
</protein>
<comment type="function">
    <text evidence="1">Catalyzes the deacetylation of 1D-myo-inositol 2-acetamido-2-deoxy-alpha-D-glucopyranoside (GlcNAc-Ins) in the mycothiol biosynthesis pathway.</text>
</comment>
<comment type="catalytic activity">
    <reaction evidence="1">
        <text>1D-myo-inositol 2-acetamido-2-deoxy-alpha-D-glucopyranoside + H2O = 1D-myo-inositol 2-amino-2-deoxy-alpha-D-glucopyranoside + acetate</text>
        <dbReference type="Rhea" id="RHEA:26180"/>
        <dbReference type="ChEBI" id="CHEBI:15377"/>
        <dbReference type="ChEBI" id="CHEBI:30089"/>
        <dbReference type="ChEBI" id="CHEBI:52442"/>
        <dbReference type="ChEBI" id="CHEBI:58886"/>
        <dbReference type="EC" id="3.5.1.103"/>
    </reaction>
</comment>
<comment type="cofactor">
    <cofactor evidence="1">
        <name>Zn(2+)</name>
        <dbReference type="ChEBI" id="CHEBI:29105"/>
    </cofactor>
    <text evidence="1">Binds 1 zinc ion per subunit.</text>
</comment>
<comment type="similarity">
    <text evidence="1">Belongs to the MshB deacetylase family.</text>
</comment>
<accession>Q2J7C9</accession>
<gene>
    <name evidence="1" type="primary">mshB1</name>
    <name type="ordered locus">Francci3_3459</name>
</gene>
<reference key="1">
    <citation type="journal article" date="2007" name="Genome Res.">
        <title>Genome characteristics of facultatively symbiotic Frankia sp. strains reflect host range and host plant biogeography.</title>
        <authorList>
            <person name="Normand P."/>
            <person name="Lapierre P."/>
            <person name="Tisa L.S."/>
            <person name="Gogarten J.P."/>
            <person name="Alloisio N."/>
            <person name="Bagnarol E."/>
            <person name="Bassi C.A."/>
            <person name="Berry A.M."/>
            <person name="Bickhart D.M."/>
            <person name="Choisne N."/>
            <person name="Couloux A."/>
            <person name="Cournoyer B."/>
            <person name="Cruveiller S."/>
            <person name="Daubin V."/>
            <person name="Demange N."/>
            <person name="Francino M.P."/>
            <person name="Goltsman E."/>
            <person name="Huang Y."/>
            <person name="Kopp O.R."/>
            <person name="Labarre L."/>
            <person name="Lapidus A."/>
            <person name="Lavire C."/>
            <person name="Marechal J."/>
            <person name="Martinez M."/>
            <person name="Mastronunzio J.E."/>
            <person name="Mullin B.C."/>
            <person name="Niemann J."/>
            <person name="Pujic P."/>
            <person name="Rawnsley T."/>
            <person name="Rouy Z."/>
            <person name="Schenowitz C."/>
            <person name="Sellstedt A."/>
            <person name="Tavares F."/>
            <person name="Tomkins J.P."/>
            <person name="Vallenet D."/>
            <person name="Valverde C."/>
            <person name="Wall L.G."/>
            <person name="Wang Y."/>
            <person name="Medigue C."/>
            <person name="Benson D.R."/>
        </authorList>
    </citation>
    <scope>NUCLEOTIDE SEQUENCE [LARGE SCALE GENOMIC DNA]</scope>
    <source>
        <strain>DSM 45818 / CECT 9043 / HFP020203 / CcI3</strain>
    </source>
</reference>
<sequence length="307" mass="32931">MPVTQGSGALPARRIVFVHAHPDDETIATGATMACYAADPDTQVVLVTCTLGEMGEVLVPELTNLRADRADQLGGYRIGELEQACTELGVTDYRFLGGAGRWRDSGMLDSPANDDPRCFWRANMDDASEALVRIVREVRPQVIVTYDAIGDYGHPDHIRAHDVTVRAFADAADPDFAPDAGPTWQVSKLYETALSHSAVESAVDRIWRSDLAKTVPEGITMPSDMLLSVPDTKVTTTIEAPGFFAAKIAAMRAHRSQMTVDGFFFALVDGNGRSAKATENFVLARGAVGPGSGSGVETDLFDGVATR</sequence>
<dbReference type="EC" id="3.5.1.103" evidence="1"/>
<dbReference type="EMBL" id="CP000249">
    <property type="protein sequence ID" value="ABD12813.1"/>
    <property type="molecule type" value="Genomic_DNA"/>
</dbReference>
<dbReference type="RefSeq" id="WP_011437838.1">
    <property type="nucleotide sequence ID" value="NC_007777.1"/>
</dbReference>
<dbReference type="SMR" id="Q2J7C9"/>
<dbReference type="STRING" id="106370.Francci3_3459"/>
<dbReference type="KEGG" id="fra:Francci3_3459"/>
<dbReference type="eggNOG" id="COG2120">
    <property type="taxonomic scope" value="Bacteria"/>
</dbReference>
<dbReference type="HOGENOM" id="CLU_049311_2_1_11"/>
<dbReference type="OrthoDB" id="158614at2"/>
<dbReference type="PhylomeDB" id="Q2J7C9"/>
<dbReference type="Proteomes" id="UP000001937">
    <property type="component" value="Chromosome"/>
</dbReference>
<dbReference type="GO" id="GO:0035595">
    <property type="term" value="F:N-acetylglucosaminylinositol deacetylase activity"/>
    <property type="evidence" value="ECO:0007669"/>
    <property type="project" value="UniProtKB-EC"/>
</dbReference>
<dbReference type="GO" id="GO:0008270">
    <property type="term" value="F:zinc ion binding"/>
    <property type="evidence" value="ECO:0007669"/>
    <property type="project" value="UniProtKB-UniRule"/>
</dbReference>
<dbReference type="GO" id="GO:0010125">
    <property type="term" value="P:mycothiol biosynthetic process"/>
    <property type="evidence" value="ECO:0007669"/>
    <property type="project" value="UniProtKB-UniRule"/>
</dbReference>
<dbReference type="Gene3D" id="3.40.50.10320">
    <property type="entry name" value="LmbE-like"/>
    <property type="match status" value="1"/>
</dbReference>
<dbReference type="HAMAP" id="MF_01696">
    <property type="entry name" value="MshB"/>
    <property type="match status" value="1"/>
</dbReference>
<dbReference type="InterPro" id="IPR003737">
    <property type="entry name" value="GlcNAc_PI_deacetylase-related"/>
</dbReference>
<dbReference type="InterPro" id="IPR024078">
    <property type="entry name" value="LmbE-like_dom_sf"/>
</dbReference>
<dbReference type="InterPro" id="IPR017810">
    <property type="entry name" value="Mycothiol_biosynthesis_MshB"/>
</dbReference>
<dbReference type="NCBIfam" id="TIGR03445">
    <property type="entry name" value="mycothiol_MshB"/>
    <property type="match status" value="1"/>
</dbReference>
<dbReference type="PANTHER" id="PTHR12993:SF26">
    <property type="entry name" value="1D-MYO-INOSITOL 2-ACETAMIDO-2-DEOXY-ALPHA-D-GLUCOPYRANOSIDE DEACETYLASE"/>
    <property type="match status" value="1"/>
</dbReference>
<dbReference type="PANTHER" id="PTHR12993">
    <property type="entry name" value="N-ACETYLGLUCOSAMINYL-PHOSPHATIDYLINOSITOL DE-N-ACETYLASE-RELATED"/>
    <property type="match status" value="1"/>
</dbReference>
<dbReference type="Pfam" id="PF02585">
    <property type="entry name" value="PIG-L"/>
    <property type="match status" value="1"/>
</dbReference>
<dbReference type="SUPFAM" id="SSF102588">
    <property type="entry name" value="LmbE-like"/>
    <property type="match status" value="1"/>
</dbReference>
<evidence type="ECO:0000255" key="1">
    <source>
        <dbReference type="HAMAP-Rule" id="MF_01696"/>
    </source>
</evidence>
<organism>
    <name type="scientific">Frankia casuarinae (strain DSM 45818 / CECT 9043 / HFP020203 / CcI3)</name>
    <dbReference type="NCBI Taxonomy" id="106370"/>
    <lineage>
        <taxon>Bacteria</taxon>
        <taxon>Bacillati</taxon>
        <taxon>Actinomycetota</taxon>
        <taxon>Actinomycetes</taxon>
        <taxon>Frankiales</taxon>
        <taxon>Frankiaceae</taxon>
        <taxon>Frankia</taxon>
    </lineage>
</organism>
<keyword id="KW-0378">Hydrolase</keyword>
<keyword id="KW-0479">Metal-binding</keyword>
<keyword id="KW-1185">Reference proteome</keyword>
<keyword id="KW-0862">Zinc</keyword>
<feature type="chain" id="PRO_0000400185" description="1D-myo-inositol 2-acetamido-2-deoxy-alpha-D-glucopyranoside deacetylase 1">
    <location>
        <begin position="1"/>
        <end position="307"/>
    </location>
</feature>
<feature type="binding site" evidence="1">
    <location>
        <position position="21"/>
    </location>
    <ligand>
        <name>Zn(2+)</name>
        <dbReference type="ChEBI" id="CHEBI:29105"/>
    </ligand>
</feature>
<feature type="binding site" evidence="1">
    <location>
        <position position="24"/>
    </location>
    <ligand>
        <name>Zn(2+)</name>
        <dbReference type="ChEBI" id="CHEBI:29105"/>
    </ligand>
</feature>
<feature type="binding site" evidence="1">
    <location>
        <position position="157"/>
    </location>
    <ligand>
        <name>Zn(2+)</name>
        <dbReference type="ChEBI" id="CHEBI:29105"/>
    </ligand>
</feature>
<name>MSHB1_FRACC</name>